<evidence type="ECO:0000255" key="1">
    <source>
        <dbReference type="HAMAP-Rule" id="MF_01317"/>
    </source>
</evidence>
<keyword id="KW-0472">Membrane</keyword>
<keyword id="KW-0602">Photosynthesis</keyword>
<keyword id="KW-0604">Photosystem II</keyword>
<keyword id="KW-0674">Reaction center</keyword>
<keyword id="KW-0793">Thylakoid</keyword>
<keyword id="KW-0812">Transmembrane</keyword>
<keyword id="KW-1133">Transmembrane helix</keyword>
<dbReference type="EMBL" id="CP000239">
    <property type="protein sequence ID" value="ABD00550.1"/>
    <property type="molecule type" value="Genomic_DNA"/>
</dbReference>
<dbReference type="RefSeq" id="WP_011431223.1">
    <property type="nucleotide sequence ID" value="NC_007775.1"/>
</dbReference>
<dbReference type="SMR" id="Q2JS36"/>
<dbReference type="STRING" id="321327.CYA_2428"/>
<dbReference type="KEGG" id="cya:CYA_2428"/>
<dbReference type="eggNOG" id="ENOG5033AKP">
    <property type="taxonomic scope" value="Bacteria"/>
</dbReference>
<dbReference type="HOGENOM" id="CLU_214425_0_0_3"/>
<dbReference type="Proteomes" id="UP000008818">
    <property type="component" value="Chromosome"/>
</dbReference>
<dbReference type="GO" id="GO:0009539">
    <property type="term" value="C:photosystem II reaction center"/>
    <property type="evidence" value="ECO:0007669"/>
    <property type="project" value="InterPro"/>
</dbReference>
<dbReference type="GO" id="GO:0031676">
    <property type="term" value="C:plasma membrane-derived thylakoid membrane"/>
    <property type="evidence" value="ECO:0007669"/>
    <property type="project" value="UniProtKB-SubCell"/>
</dbReference>
<dbReference type="GO" id="GO:0015979">
    <property type="term" value="P:photosynthesis"/>
    <property type="evidence" value="ECO:0007669"/>
    <property type="project" value="UniProtKB-UniRule"/>
</dbReference>
<dbReference type="HAMAP" id="MF_01317">
    <property type="entry name" value="PSII_PsbL"/>
    <property type="match status" value="1"/>
</dbReference>
<dbReference type="InterPro" id="IPR003372">
    <property type="entry name" value="PSII_PsbL"/>
</dbReference>
<dbReference type="InterPro" id="IPR037266">
    <property type="entry name" value="PSII_PsbL_sf"/>
</dbReference>
<dbReference type="NCBIfam" id="NF001972">
    <property type="entry name" value="PRK00753.1"/>
    <property type="match status" value="1"/>
</dbReference>
<dbReference type="Pfam" id="PF02419">
    <property type="entry name" value="PsbL"/>
    <property type="match status" value="1"/>
</dbReference>
<dbReference type="SUPFAM" id="SSF161017">
    <property type="entry name" value="Photosystem II reaction center protein L, PsbL"/>
    <property type="match status" value="1"/>
</dbReference>
<name>PSBL_SYNJA</name>
<gene>
    <name evidence="1" type="primary">psbL</name>
    <name type="ordered locus">CYA_2428</name>
</gene>
<feature type="chain" id="PRO_0000306215" description="Photosystem II reaction center protein L">
    <location>
        <begin position="1"/>
        <end position="41"/>
    </location>
</feature>
<feature type="transmembrane region" description="Helical" evidence="1">
    <location>
        <begin position="20"/>
        <end position="40"/>
    </location>
</feature>
<accession>Q2JS36</accession>
<proteinExistence type="inferred from homology"/>
<comment type="function">
    <text evidence="1">One of the components of the core complex of photosystem II (PSII). PSII is a light-driven water:plastoquinone oxidoreductase that uses light energy to abstract electrons from H(2)O, generating O(2) and a proton gradient subsequently used for ATP formation. It consists of a core antenna complex that captures photons, and an electron transfer chain that converts photonic excitation into a charge separation. This subunit is found at the monomer-monomer interface and is required for correct PSII assembly and/or dimerization.</text>
</comment>
<comment type="subunit">
    <text evidence="1">PSII is composed of 1 copy each of membrane proteins PsbA, PsbB, PsbC, PsbD, PsbE, PsbF, PsbH, PsbI, PsbJ, PsbK, PsbL, PsbM, PsbT, PsbX, PsbY, PsbZ, Psb30/Ycf12, peripheral proteins PsbO, CyanoQ (PsbQ), PsbU, PsbV and a large number of cofactors. It forms dimeric complexes.</text>
</comment>
<comment type="subcellular location">
    <subcellularLocation>
        <location evidence="1">Cellular thylakoid membrane</location>
        <topology evidence="1">Single-pass membrane protein</topology>
    </subcellularLocation>
</comment>
<comment type="similarity">
    <text evidence="1">Belongs to the PsbL family.</text>
</comment>
<sequence length="41" mass="4642">MADQPEKNPNTQPVELNRTSLYLGLLLVFVVGLLFSSYFLN</sequence>
<organism>
    <name type="scientific">Synechococcus sp. (strain JA-3-3Ab)</name>
    <name type="common">Cyanobacteria bacterium Yellowstone A-Prime</name>
    <dbReference type="NCBI Taxonomy" id="321327"/>
    <lineage>
        <taxon>Bacteria</taxon>
        <taxon>Bacillati</taxon>
        <taxon>Cyanobacteriota</taxon>
        <taxon>Cyanophyceae</taxon>
        <taxon>Synechococcales</taxon>
        <taxon>Synechococcaceae</taxon>
        <taxon>Synechococcus</taxon>
    </lineage>
</organism>
<reference key="1">
    <citation type="journal article" date="2007" name="ISME J.">
        <title>Population level functional diversity in a microbial community revealed by comparative genomic and metagenomic analyses.</title>
        <authorList>
            <person name="Bhaya D."/>
            <person name="Grossman A.R."/>
            <person name="Steunou A.-S."/>
            <person name="Khuri N."/>
            <person name="Cohan F.M."/>
            <person name="Hamamura N."/>
            <person name="Melendrez M.C."/>
            <person name="Bateson M.M."/>
            <person name="Ward D.M."/>
            <person name="Heidelberg J.F."/>
        </authorList>
    </citation>
    <scope>NUCLEOTIDE SEQUENCE [LARGE SCALE GENOMIC DNA]</scope>
    <source>
        <strain>JA-3-3Ab</strain>
    </source>
</reference>
<protein>
    <recommendedName>
        <fullName evidence="1">Photosystem II reaction center protein L</fullName>
        <shortName evidence="1">PSII-L</shortName>
    </recommendedName>
</protein>